<protein>
    <recommendedName>
        <fullName evidence="1">Probable Fe(2+)-trafficking protein</fullName>
    </recommendedName>
</protein>
<gene>
    <name type="ordered locus">CBUD_1132</name>
</gene>
<comment type="function">
    <text evidence="1">Could be a mediator in iron transactions between iron acquisition and iron-requiring processes, such as synthesis and/or repair of Fe-S clusters in biosynthetic enzymes.</text>
</comment>
<comment type="similarity">
    <text evidence="1">Belongs to the Fe(2+)-trafficking protein family.</text>
</comment>
<keyword id="KW-0408">Iron</keyword>
<feature type="chain" id="PRO_1000083073" description="Probable Fe(2+)-trafficking protein">
    <location>
        <begin position="1"/>
        <end position="90"/>
    </location>
</feature>
<evidence type="ECO:0000255" key="1">
    <source>
        <dbReference type="HAMAP-Rule" id="MF_00686"/>
    </source>
</evidence>
<reference key="1">
    <citation type="journal article" date="2009" name="Infect. Immun.">
        <title>Comparative genomics reveal extensive transposon-mediated genomic plasticity and diversity among potential effector proteins within the genus Coxiella.</title>
        <authorList>
            <person name="Beare P.A."/>
            <person name="Unsworth N."/>
            <person name="Andoh M."/>
            <person name="Voth D.E."/>
            <person name="Omsland A."/>
            <person name="Gilk S.D."/>
            <person name="Williams K.P."/>
            <person name="Sobral B.W."/>
            <person name="Kupko J.J. III"/>
            <person name="Porcella S.F."/>
            <person name="Samuel J.E."/>
            <person name="Heinzen R.A."/>
        </authorList>
    </citation>
    <scope>NUCLEOTIDE SEQUENCE [LARGE SCALE GENOMIC DNA]</scope>
    <source>
        <strain>Dugway 5J108-111</strain>
    </source>
</reference>
<dbReference type="EMBL" id="CP000733">
    <property type="protein sequence ID" value="ABS78104.1"/>
    <property type="molecule type" value="Genomic_DNA"/>
</dbReference>
<dbReference type="RefSeq" id="WP_005768500.1">
    <property type="nucleotide sequence ID" value="NC_009727.1"/>
</dbReference>
<dbReference type="SMR" id="A9KCK3"/>
<dbReference type="KEGG" id="cbd:CBUD_1132"/>
<dbReference type="HOGENOM" id="CLU_170994_0_0_6"/>
<dbReference type="Proteomes" id="UP000008555">
    <property type="component" value="Chromosome"/>
</dbReference>
<dbReference type="GO" id="GO:0005829">
    <property type="term" value="C:cytosol"/>
    <property type="evidence" value="ECO:0007669"/>
    <property type="project" value="TreeGrafter"/>
</dbReference>
<dbReference type="GO" id="GO:0005506">
    <property type="term" value="F:iron ion binding"/>
    <property type="evidence" value="ECO:0007669"/>
    <property type="project" value="UniProtKB-UniRule"/>
</dbReference>
<dbReference type="GO" id="GO:0034599">
    <property type="term" value="P:cellular response to oxidative stress"/>
    <property type="evidence" value="ECO:0007669"/>
    <property type="project" value="TreeGrafter"/>
</dbReference>
<dbReference type="FunFam" id="1.10.3880.10:FF:000001">
    <property type="entry name" value="Probable Fe(2+)-trafficking protein"/>
    <property type="match status" value="1"/>
</dbReference>
<dbReference type="Gene3D" id="1.10.3880.10">
    <property type="entry name" value="Fe(II) trafficking protein YggX"/>
    <property type="match status" value="1"/>
</dbReference>
<dbReference type="HAMAP" id="MF_00686">
    <property type="entry name" value="Fe_traffic_YggX"/>
    <property type="match status" value="1"/>
</dbReference>
<dbReference type="InterPro" id="IPR007457">
    <property type="entry name" value="Fe_traffick_prot_YggX"/>
</dbReference>
<dbReference type="InterPro" id="IPR036766">
    <property type="entry name" value="Fe_traffick_prot_YggX_sf"/>
</dbReference>
<dbReference type="NCBIfam" id="NF003817">
    <property type="entry name" value="PRK05408.1"/>
    <property type="match status" value="1"/>
</dbReference>
<dbReference type="PANTHER" id="PTHR36965">
    <property type="entry name" value="FE(2+)-TRAFFICKING PROTEIN-RELATED"/>
    <property type="match status" value="1"/>
</dbReference>
<dbReference type="PANTHER" id="PTHR36965:SF1">
    <property type="entry name" value="FE(2+)-TRAFFICKING PROTEIN-RELATED"/>
    <property type="match status" value="1"/>
</dbReference>
<dbReference type="Pfam" id="PF04362">
    <property type="entry name" value="Iron_traffic"/>
    <property type="match status" value="1"/>
</dbReference>
<dbReference type="PIRSF" id="PIRSF029827">
    <property type="entry name" value="Fe_traffic_YggX"/>
    <property type="match status" value="1"/>
</dbReference>
<dbReference type="SUPFAM" id="SSF111148">
    <property type="entry name" value="YggX-like"/>
    <property type="match status" value="1"/>
</dbReference>
<name>FETP_COXBN</name>
<accession>A9KCK3</accession>
<organism>
    <name type="scientific">Coxiella burnetii (strain Dugway 5J108-111)</name>
    <dbReference type="NCBI Taxonomy" id="434922"/>
    <lineage>
        <taxon>Bacteria</taxon>
        <taxon>Pseudomonadati</taxon>
        <taxon>Pseudomonadota</taxon>
        <taxon>Gammaproteobacteria</taxon>
        <taxon>Legionellales</taxon>
        <taxon>Coxiellaceae</taxon>
        <taxon>Coxiella</taxon>
    </lineage>
</organism>
<proteinExistence type="inferred from homology"/>
<sequence length="90" mass="10482">MTRRIICQKLGKEADALNYSPYPGELGERIYNHISEQAWQAWLSHQTMLINEYRLSLIDPKARQFLEQEMINFLFGTGSEKPAGYTSEKE</sequence>